<proteinExistence type="inferred from homology"/>
<comment type="function">
    <text evidence="1">Catalyzes the ATP-dependent conversion of 7-carboxy-7-deazaguanine (CDG) to 7-cyano-7-deazaguanine (preQ(0)).</text>
</comment>
<comment type="catalytic activity">
    <reaction evidence="1">
        <text>7-carboxy-7-deazaguanine + NH4(+) + ATP = 7-cyano-7-deazaguanine + ADP + phosphate + H2O + H(+)</text>
        <dbReference type="Rhea" id="RHEA:27982"/>
        <dbReference type="ChEBI" id="CHEBI:15377"/>
        <dbReference type="ChEBI" id="CHEBI:15378"/>
        <dbReference type="ChEBI" id="CHEBI:28938"/>
        <dbReference type="ChEBI" id="CHEBI:30616"/>
        <dbReference type="ChEBI" id="CHEBI:43474"/>
        <dbReference type="ChEBI" id="CHEBI:45075"/>
        <dbReference type="ChEBI" id="CHEBI:61036"/>
        <dbReference type="ChEBI" id="CHEBI:456216"/>
        <dbReference type="EC" id="6.3.4.20"/>
    </reaction>
</comment>
<comment type="cofactor">
    <cofactor evidence="1">
        <name>Zn(2+)</name>
        <dbReference type="ChEBI" id="CHEBI:29105"/>
    </cofactor>
    <text evidence="1">Binds 1 zinc ion per subunit.</text>
</comment>
<comment type="pathway">
    <text evidence="1">Purine metabolism; 7-cyano-7-deazaguanine biosynthesis.</text>
</comment>
<comment type="similarity">
    <text evidence="1">Belongs to the QueC family.</text>
</comment>
<comment type="sequence caution" evidence="2">
    <conflict type="erroneous initiation">
        <sequence resource="EMBL-CDS" id="ABF43644"/>
    </conflict>
</comment>
<protein>
    <recommendedName>
        <fullName evidence="1">7-cyano-7-deazaguanine synthase</fullName>
        <ecNumber evidence="1">6.3.4.20</ecNumber>
    </recommendedName>
    <alternativeName>
        <fullName evidence="1">7-cyano-7-carbaguanine synthase</fullName>
    </alternativeName>
    <alternativeName>
        <fullName evidence="1">PreQ(0) synthase</fullName>
    </alternativeName>
    <alternativeName>
        <fullName evidence="1">Queuosine biosynthesis protein QueC</fullName>
    </alternativeName>
</protein>
<sequence>MKVQRGDTGKAVVVLSGGMDSTVCATLAVREYGAENIGALHVSYGQRTAAREKQAFAAVAERLGIQTRLAVETPFFRAIGGSALTDANIAVPDAGELIGHEIPVTYVPFRNAHLLAMAVSWAEVLGASKIYIGAVAQDSSGYPDCRPEFYEAYNLAVRRGTKAGDIEVVTPLIALRKHEIVSLGLELGAPFDLTWSCYSREDCACGVCDSCVLRLRAFEGAGAVDPVPYAPRLAGHD</sequence>
<keyword id="KW-0067">ATP-binding</keyword>
<keyword id="KW-0436">Ligase</keyword>
<keyword id="KW-0479">Metal-binding</keyword>
<keyword id="KW-0547">Nucleotide-binding</keyword>
<keyword id="KW-0671">Queuosine biosynthesis</keyword>
<keyword id="KW-1185">Reference proteome</keyword>
<keyword id="KW-0862">Zinc</keyword>
<accession>Q1IHK6</accession>
<feature type="chain" id="PRO_0000255915" description="7-cyano-7-deazaguanine synthase">
    <location>
        <begin position="1"/>
        <end position="237"/>
    </location>
</feature>
<feature type="binding site" evidence="1">
    <location>
        <begin position="15"/>
        <end position="25"/>
    </location>
    <ligand>
        <name>ATP</name>
        <dbReference type="ChEBI" id="CHEBI:30616"/>
    </ligand>
</feature>
<feature type="binding site" evidence="1">
    <location>
        <position position="197"/>
    </location>
    <ligand>
        <name>Zn(2+)</name>
        <dbReference type="ChEBI" id="CHEBI:29105"/>
    </ligand>
</feature>
<feature type="binding site" evidence="1">
    <location>
        <position position="205"/>
    </location>
    <ligand>
        <name>Zn(2+)</name>
        <dbReference type="ChEBI" id="CHEBI:29105"/>
    </ligand>
</feature>
<feature type="binding site" evidence="1">
    <location>
        <position position="208"/>
    </location>
    <ligand>
        <name>Zn(2+)</name>
        <dbReference type="ChEBI" id="CHEBI:29105"/>
    </ligand>
</feature>
<feature type="binding site" evidence="1">
    <location>
        <position position="211"/>
    </location>
    <ligand>
        <name>Zn(2+)</name>
        <dbReference type="ChEBI" id="CHEBI:29105"/>
    </ligand>
</feature>
<organism>
    <name type="scientific">Koribacter versatilis (strain Ellin345)</name>
    <dbReference type="NCBI Taxonomy" id="204669"/>
    <lineage>
        <taxon>Bacteria</taxon>
        <taxon>Pseudomonadati</taxon>
        <taxon>Acidobacteriota</taxon>
        <taxon>Terriglobia</taxon>
        <taxon>Terriglobales</taxon>
        <taxon>Candidatus Korobacteraceae</taxon>
        <taxon>Candidatus Korobacter</taxon>
    </lineage>
</organism>
<evidence type="ECO:0000255" key="1">
    <source>
        <dbReference type="HAMAP-Rule" id="MF_01633"/>
    </source>
</evidence>
<evidence type="ECO:0000305" key="2"/>
<reference key="1">
    <citation type="journal article" date="2009" name="Appl. Environ. Microbiol.">
        <title>Three genomes from the phylum Acidobacteria provide insight into the lifestyles of these microorganisms in soils.</title>
        <authorList>
            <person name="Ward N.L."/>
            <person name="Challacombe J.F."/>
            <person name="Janssen P.H."/>
            <person name="Henrissat B."/>
            <person name="Coutinho P.M."/>
            <person name="Wu M."/>
            <person name="Xie G."/>
            <person name="Haft D.H."/>
            <person name="Sait M."/>
            <person name="Badger J."/>
            <person name="Barabote R.D."/>
            <person name="Bradley B."/>
            <person name="Brettin T.S."/>
            <person name="Brinkac L.M."/>
            <person name="Bruce D."/>
            <person name="Creasy T."/>
            <person name="Daugherty S.C."/>
            <person name="Davidsen T.M."/>
            <person name="DeBoy R.T."/>
            <person name="Detter J.C."/>
            <person name="Dodson R.J."/>
            <person name="Durkin A.S."/>
            <person name="Ganapathy A."/>
            <person name="Gwinn-Giglio M."/>
            <person name="Han C.S."/>
            <person name="Khouri H."/>
            <person name="Kiss H."/>
            <person name="Kothari S.P."/>
            <person name="Madupu R."/>
            <person name="Nelson K.E."/>
            <person name="Nelson W.C."/>
            <person name="Paulsen I."/>
            <person name="Penn K."/>
            <person name="Ren Q."/>
            <person name="Rosovitz M.J."/>
            <person name="Selengut J.D."/>
            <person name="Shrivastava S."/>
            <person name="Sullivan S.A."/>
            <person name="Tapia R."/>
            <person name="Thompson L.S."/>
            <person name="Watkins K.L."/>
            <person name="Yang Q."/>
            <person name="Yu C."/>
            <person name="Zafar N."/>
            <person name="Zhou L."/>
            <person name="Kuske C.R."/>
        </authorList>
    </citation>
    <scope>NUCLEOTIDE SEQUENCE [LARGE SCALE GENOMIC DNA]</scope>
    <source>
        <strain>Ellin345</strain>
    </source>
</reference>
<name>QUEC_KORVE</name>
<dbReference type="EC" id="6.3.4.20" evidence="1"/>
<dbReference type="EMBL" id="CP000360">
    <property type="protein sequence ID" value="ABF43644.1"/>
    <property type="status" value="ALT_INIT"/>
    <property type="molecule type" value="Genomic_DNA"/>
</dbReference>
<dbReference type="SMR" id="Q1IHK6"/>
<dbReference type="STRING" id="204669.Acid345_4644"/>
<dbReference type="EnsemblBacteria" id="ABF43644">
    <property type="protein sequence ID" value="ABF43644"/>
    <property type="gene ID" value="Acid345_4644"/>
</dbReference>
<dbReference type="KEGG" id="aba:Acid345_4644"/>
<dbReference type="eggNOG" id="COG0603">
    <property type="taxonomic scope" value="Bacteria"/>
</dbReference>
<dbReference type="HOGENOM" id="CLU_081854_1_0_0"/>
<dbReference type="OrthoDB" id="9789567at2"/>
<dbReference type="UniPathway" id="UPA00391"/>
<dbReference type="Proteomes" id="UP000002432">
    <property type="component" value="Chromosome"/>
</dbReference>
<dbReference type="GO" id="GO:0005524">
    <property type="term" value="F:ATP binding"/>
    <property type="evidence" value="ECO:0007669"/>
    <property type="project" value="UniProtKB-UniRule"/>
</dbReference>
<dbReference type="GO" id="GO:0016879">
    <property type="term" value="F:ligase activity, forming carbon-nitrogen bonds"/>
    <property type="evidence" value="ECO:0007669"/>
    <property type="project" value="UniProtKB-UniRule"/>
</dbReference>
<dbReference type="GO" id="GO:0008270">
    <property type="term" value="F:zinc ion binding"/>
    <property type="evidence" value="ECO:0007669"/>
    <property type="project" value="UniProtKB-UniRule"/>
</dbReference>
<dbReference type="GO" id="GO:0008616">
    <property type="term" value="P:queuosine biosynthetic process"/>
    <property type="evidence" value="ECO:0007669"/>
    <property type="project" value="UniProtKB-UniRule"/>
</dbReference>
<dbReference type="CDD" id="cd01995">
    <property type="entry name" value="QueC-like"/>
    <property type="match status" value="1"/>
</dbReference>
<dbReference type="Gene3D" id="3.40.50.620">
    <property type="entry name" value="HUPs"/>
    <property type="match status" value="1"/>
</dbReference>
<dbReference type="HAMAP" id="MF_01633">
    <property type="entry name" value="QueC"/>
    <property type="match status" value="1"/>
</dbReference>
<dbReference type="InterPro" id="IPR018317">
    <property type="entry name" value="QueC"/>
</dbReference>
<dbReference type="InterPro" id="IPR014729">
    <property type="entry name" value="Rossmann-like_a/b/a_fold"/>
</dbReference>
<dbReference type="NCBIfam" id="TIGR00364">
    <property type="entry name" value="7-cyano-7-deazaguanine synthase QueC"/>
    <property type="match status" value="1"/>
</dbReference>
<dbReference type="PANTHER" id="PTHR42914">
    <property type="entry name" value="7-CYANO-7-DEAZAGUANINE SYNTHASE"/>
    <property type="match status" value="1"/>
</dbReference>
<dbReference type="PANTHER" id="PTHR42914:SF1">
    <property type="entry name" value="7-CYANO-7-DEAZAGUANINE SYNTHASE"/>
    <property type="match status" value="1"/>
</dbReference>
<dbReference type="Pfam" id="PF06508">
    <property type="entry name" value="QueC"/>
    <property type="match status" value="1"/>
</dbReference>
<dbReference type="PIRSF" id="PIRSF006293">
    <property type="entry name" value="ExsB"/>
    <property type="match status" value="1"/>
</dbReference>
<dbReference type="SUPFAM" id="SSF52402">
    <property type="entry name" value="Adenine nucleotide alpha hydrolases-like"/>
    <property type="match status" value="1"/>
</dbReference>
<gene>
    <name evidence="1" type="primary">queC</name>
    <name type="ordered locus">Acid345_4644</name>
</gene>